<protein>
    <recommendedName>
        <fullName evidence="1">8-amino-7-oxononanoate synthase</fullName>
        <shortName evidence="1">AONS</shortName>
        <ecNumber evidence="1">2.3.1.47</ecNumber>
    </recommendedName>
    <alternativeName>
        <fullName evidence="1">7-keto-8-amino-pelargonic acid synthase</fullName>
        <shortName evidence="1">7-KAP synthase</shortName>
        <shortName evidence="1">KAPA synthase</shortName>
    </alternativeName>
    <alternativeName>
        <fullName evidence="1">8-amino-7-ketopelargonate synthase</fullName>
    </alternativeName>
</protein>
<organism>
    <name type="scientific">Erwinia tasmaniensis (strain DSM 17950 / CFBP 7177 / CIP 109463 / NCPPB 4357 / Et1/99)</name>
    <dbReference type="NCBI Taxonomy" id="465817"/>
    <lineage>
        <taxon>Bacteria</taxon>
        <taxon>Pseudomonadati</taxon>
        <taxon>Pseudomonadota</taxon>
        <taxon>Gammaproteobacteria</taxon>
        <taxon>Enterobacterales</taxon>
        <taxon>Erwiniaceae</taxon>
        <taxon>Erwinia</taxon>
    </lineage>
</organism>
<feature type="chain" id="PRO_0000380989" description="8-amino-7-oxononanoate synthase">
    <location>
        <begin position="1"/>
        <end position="384"/>
    </location>
</feature>
<feature type="binding site" evidence="1">
    <location>
        <position position="21"/>
    </location>
    <ligand>
        <name>substrate</name>
    </ligand>
</feature>
<feature type="binding site" evidence="1">
    <location>
        <begin position="108"/>
        <end position="109"/>
    </location>
    <ligand>
        <name>pyridoxal 5'-phosphate</name>
        <dbReference type="ChEBI" id="CHEBI:597326"/>
    </ligand>
</feature>
<feature type="binding site" evidence="1">
    <location>
        <position position="133"/>
    </location>
    <ligand>
        <name>substrate</name>
    </ligand>
</feature>
<feature type="binding site" evidence="1">
    <location>
        <position position="179"/>
    </location>
    <ligand>
        <name>pyridoxal 5'-phosphate</name>
        <dbReference type="ChEBI" id="CHEBI:597326"/>
    </ligand>
</feature>
<feature type="binding site" evidence="1">
    <location>
        <position position="207"/>
    </location>
    <ligand>
        <name>pyridoxal 5'-phosphate</name>
        <dbReference type="ChEBI" id="CHEBI:597326"/>
    </ligand>
</feature>
<feature type="binding site" evidence="1">
    <location>
        <position position="233"/>
    </location>
    <ligand>
        <name>pyridoxal 5'-phosphate</name>
        <dbReference type="ChEBI" id="CHEBI:597326"/>
    </ligand>
</feature>
<feature type="binding site" evidence="1">
    <location>
        <position position="350"/>
    </location>
    <ligand>
        <name>substrate</name>
    </ligand>
</feature>
<feature type="modified residue" description="N6-(pyridoxal phosphate)lysine" evidence="1">
    <location>
        <position position="236"/>
    </location>
</feature>
<name>BIOF_ERWT9</name>
<sequence length="384" mass="41649">MAWSQRIEQALVKRRLDGQYRQRHPTGQADGRTLSVAGHNYLNFSANDYLGLSHDGRVVRAWQQGAERYGVGAGGSAHVTGYRAPQAELEHQLADWLGYRRALLFISGFAANQAVIAAMMAKNDRIFADKLCHASLLEAASLSPATLRRFGHNQPSALAKLLAAEGEGETLVVTEGIFSMDGDRAALKPIHQLARDRDGWLLVDDAHGVGVCGEQGRGSCWQQGVQPELLIVTFGKAFGVSGAALLCSDATAEYLLQFARHLIYSTAMPPAQACAIQAALGCVQQGDDLRQRLAANITRFRQGARGLRGQLASSDSAIQPLIVGDEQKVLGLARRLRDRRCWVTAIRPPTVPPGTSRLRITLSAAHRENDIDHLLEALHATDGE</sequence>
<evidence type="ECO:0000255" key="1">
    <source>
        <dbReference type="HAMAP-Rule" id="MF_01693"/>
    </source>
</evidence>
<comment type="function">
    <text evidence="1">Catalyzes the decarboxylative condensation of pimeloyl-[acyl-carrier protein] and L-alanine to produce 8-amino-7-oxononanoate (AON), [acyl-carrier protein], and carbon dioxide.</text>
</comment>
<comment type="catalytic activity">
    <reaction evidence="1">
        <text>6-carboxyhexanoyl-[ACP] + L-alanine + H(+) = (8S)-8-amino-7-oxononanoate + holo-[ACP] + CO2</text>
        <dbReference type="Rhea" id="RHEA:42288"/>
        <dbReference type="Rhea" id="RHEA-COMP:9685"/>
        <dbReference type="Rhea" id="RHEA-COMP:9955"/>
        <dbReference type="ChEBI" id="CHEBI:15378"/>
        <dbReference type="ChEBI" id="CHEBI:16526"/>
        <dbReference type="ChEBI" id="CHEBI:57972"/>
        <dbReference type="ChEBI" id="CHEBI:64479"/>
        <dbReference type="ChEBI" id="CHEBI:78846"/>
        <dbReference type="ChEBI" id="CHEBI:149468"/>
        <dbReference type="EC" id="2.3.1.47"/>
    </reaction>
</comment>
<comment type="cofactor">
    <cofactor evidence="1">
        <name>pyridoxal 5'-phosphate</name>
        <dbReference type="ChEBI" id="CHEBI:597326"/>
    </cofactor>
</comment>
<comment type="pathway">
    <text evidence="1">Cofactor biosynthesis; biotin biosynthesis.</text>
</comment>
<comment type="subunit">
    <text evidence="1">Homodimer.</text>
</comment>
<comment type="similarity">
    <text evidence="1">Belongs to the class-II pyridoxal-phosphate-dependent aminotransferase family. BioF subfamily.</text>
</comment>
<gene>
    <name evidence="1" type="primary">bioF</name>
    <name type="ordered locus">ETA_22650</name>
</gene>
<keyword id="KW-0093">Biotin biosynthesis</keyword>
<keyword id="KW-0663">Pyridoxal phosphate</keyword>
<keyword id="KW-1185">Reference proteome</keyword>
<keyword id="KW-0808">Transferase</keyword>
<proteinExistence type="inferred from homology"/>
<dbReference type="EC" id="2.3.1.47" evidence="1"/>
<dbReference type="EMBL" id="CU468135">
    <property type="protein sequence ID" value="CAO97311.1"/>
    <property type="molecule type" value="Genomic_DNA"/>
</dbReference>
<dbReference type="RefSeq" id="WP_012441980.1">
    <property type="nucleotide sequence ID" value="NC_010694.1"/>
</dbReference>
<dbReference type="SMR" id="B2VBT8"/>
<dbReference type="STRING" id="465817.ETA_22650"/>
<dbReference type="KEGG" id="eta:ETA_22650"/>
<dbReference type="eggNOG" id="COG0156">
    <property type="taxonomic scope" value="Bacteria"/>
</dbReference>
<dbReference type="HOGENOM" id="CLU_015846_11_2_6"/>
<dbReference type="OrthoDB" id="9807157at2"/>
<dbReference type="UniPathway" id="UPA00078"/>
<dbReference type="Proteomes" id="UP000001726">
    <property type="component" value="Chromosome"/>
</dbReference>
<dbReference type="GO" id="GO:0008710">
    <property type="term" value="F:8-amino-7-oxononanoate synthase activity"/>
    <property type="evidence" value="ECO:0007669"/>
    <property type="project" value="UniProtKB-UniRule"/>
</dbReference>
<dbReference type="GO" id="GO:0030170">
    <property type="term" value="F:pyridoxal phosphate binding"/>
    <property type="evidence" value="ECO:0007669"/>
    <property type="project" value="UniProtKB-UniRule"/>
</dbReference>
<dbReference type="GO" id="GO:0009102">
    <property type="term" value="P:biotin biosynthetic process"/>
    <property type="evidence" value="ECO:0007669"/>
    <property type="project" value="UniProtKB-UniRule"/>
</dbReference>
<dbReference type="CDD" id="cd06454">
    <property type="entry name" value="KBL_like"/>
    <property type="match status" value="1"/>
</dbReference>
<dbReference type="Gene3D" id="3.90.1150.10">
    <property type="entry name" value="Aspartate Aminotransferase, domain 1"/>
    <property type="match status" value="1"/>
</dbReference>
<dbReference type="Gene3D" id="3.40.640.10">
    <property type="entry name" value="Type I PLP-dependent aspartate aminotransferase-like (Major domain)"/>
    <property type="match status" value="1"/>
</dbReference>
<dbReference type="HAMAP" id="MF_01693">
    <property type="entry name" value="BioF_aminotrans_2"/>
    <property type="match status" value="1"/>
</dbReference>
<dbReference type="InterPro" id="IPR001917">
    <property type="entry name" value="Aminotrans_II_pyridoxalP_BS"/>
</dbReference>
<dbReference type="InterPro" id="IPR004839">
    <property type="entry name" value="Aminotransferase_I/II_large"/>
</dbReference>
<dbReference type="InterPro" id="IPR050087">
    <property type="entry name" value="AON_synthase_class-II"/>
</dbReference>
<dbReference type="InterPro" id="IPR004723">
    <property type="entry name" value="AONS_Archaea/Proteobacteria"/>
</dbReference>
<dbReference type="InterPro" id="IPR022834">
    <property type="entry name" value="AONS_Proteobacteria"/>
</dbReference>
<dbReference type="InterPro" id="IPR015424">
    <property type="entry name" value="PyrdxlP-dep_Trfase"/>
</dbReference>
<dbReference type="InterPro" id="IPR015421">
    <property type="entry name" value="PyrdxlP-dep_Trfase_major"/>
</dbReference>
<dbReference type="InterPro" id="IPR015422">
    <property type="entry name" value="PyrdxlP-dep_Trfase_small"/>
</dbReference>
<dbReference type="NCBIfam" id="TIGR00858">
    <property type="entry name" value="bioF"/>
    <property type="match status" value="1"/>
</dbReference>
<dbReference type="PANTHER" id="PTHR13693:SF100">
    <property type="entry name" value="8-AMINO-7-OXONONANOATE SYNTHASE"/>
    <property type="match status" value="1"/>
</dbReference>
<dbReference type="PANTHER" id="PTHR13693">
    <property type="entry name" value="CLASS II AMINOTRANSFERASE/8-AMINO-7-OXONONANOATE SYNTHASE"/>
    <property type="match status" value="1"/>
</dbReference>
<dbReference type="Pfam" id="PF00155">
    <property type="entry name" value="Aminotran_1_2"/>
    <property type="match status" value="1"/>
</dbReference>
<dbReference type="SUPFAM" id="SSF53383">
    <property type="entry name" value="PLP-dependent transferases"/>
    <property type="match status" value="1"/>
</dbReference>
<dbReference type="PROSITE" id="PS00599">
    <property type="entry name" value="AA_TRANSFER_CLASS_2"/>
    <property type="match status" value="1"/>
</dbReference>
<accession>B2VBT8</accession>
<reference key="1">
    <citation type="journal article" date="2008" name="Environ. Microbiol.">
        <title>The genome of Erwinia tasmaniensis strain Et1/99, a non-pathogenic bacterium in the genus Erwinia.</title>
        <authorList>
            <person name="Kube M."/>
            <person name="Migdoll A.M."/>
            <person name="Mueller I."/>
            <person name="Kuhl H."/>
            <person name="Beck A."/>
            <person name="Reinhardt R."/>
            <person name="Geider K."/>
        </authorList>
    </citation>
    <scope>NUCLEOTIDE SEQUENCE [LARGE SCALE GENOMIC DNA]</scope>
    <source>
        <strain>DSM 17950 / CFBP 7177 / CIP 109463 / NCPPB 4357 / Et1/99</strain>
    </source>
</reference>